<feature type="chain" id="PRO_1000005670" description="Cytidylate kinase">
    <location>
        <begin position="1"/>
        <end position="182"/>
    </location>
</feature>
<feature type="binding site" evidence="1">
    <location>
        <begin position="7"/>
        <end position="15"/>
    </location>
    <ligand>
        <name>ATP</name>
        <dbReference type="ChEBI" id="CHEBI:30616"/>
    </ligand>
</feature>
<gene>
    <name evidence="1" type="primary">cmk</name>
    <name type="ordered locus">Mboo_0558</name>
</gene>
<organism>
    <name type="scientific">Methanoregula boonei (strain DSM 21154 / JCM 14090 / 6A8)</name>
    <dbReference type="NCBI Taxonomy" id="456442"/>
    <lineage>
        <taxon>Archaea</taxon>
        <taxon>Methanobacteriati</taxon>
        <taxon>Methanobacteriota</taxon>
        <taxon>Stenosarchaea group</taxon>
        <taxon>Methanomicrobia</taxon>
        <taxon>Methanomicrobiales</taxon>
        <taxon>Methanoregulaceae</taxon>
        <taxon>Methanoregula</taxon>
    </lineage>
</organism>
<sequence length="182" mass="20660">MRITVSGLPGSGTTSLSRYLSERYGFTMISAGEVFRQCAKEHNMELAEFGRLAEKDPAYDKMIDARQKEIAEKSDNIIVEGRLSGWMVENADLKIWLFAPISCRLDRIVFRDQIADVETAKAITLEREHCEAIRYQQYYSIDINDHSVYHLILNSEHWGVDDLGKIVAAAIDQLKKTPFAAS</sequence>
<comment type="catalytic activity">
    <reaction evidence="1">
        <text>CMP + ATP = CDP + ADP</text>
        <dbReference type="Rhea" id="RHEA:11600"/>
        <dbReference type="ChEBI" id="CHEBI:30616"/>
        <dbReference type="ChEBI" id="CHEBI:58069"/>
        <dbReference type="ChEBI" id="CHEBI:60377"/>
        <dbReference type="ChEBI" id="CHEBI:456216"/>
        <dbReference type="EC" id="2.7.4.25"/>
    </reaction>
</comment>
<comment type="catalytic activity">
    <reaction evidence="1">
        <text>dCMP + ATP = dCDP + ADP</text>
        <dbReference type="Rhea" id="RHEA:25094"/>
        <dbReference type="ChEBI" id="CHEBI:30616"/>
        <dbReference type="ChEBI" id="CHEBI:57566"/>
        <dbReference type="ChEBI" id="CHEBI:58593"/>
        <dbReference type="ChEBI" id="CHEBI:456216"/>
        <dbReference type="EC" id="2.7.4.25"/>
    </reaction>
</comment>
<comment type="subcellular location">
    <subcellularLocation>
        <location evidence="1">Cytoplasm</location>
    </subcellularLocation>
</comment>
<comment type="similarity">
    <text evidence="1">Belongs to the cytidylate kinase family. Type 2 subfamily.</text>
</comment>
<evidence type="ECO:0000255" key="1">
    <source>
        <dbReference type="HAMAP-Rule" id="MF_00239"/>
    </source>
</evidence>
<dbReference type="EC" id="2.7.4.25" evidence="1"/>
<dbReference type="EMBL" id="CP000780">
    <property type="protein sequence ID" value="ABS55076.1"/>
    <property type="molecule type" value="Genomic_DNA"/>
</dbReference>
<dbReference type="RefSeq" id="WP_012106097.1">
    <property type="nucleotide sequence ID" value="NC_009712.1"/>
</dbReference>
<dbReference type="SMR" id="A7I5R5"/>
<dbReference type="STRING" id="456442.Mboo_0558"/>
<dbReference type="GeneID" id="5411180"/>
<dbReference type="KEGG" id="mbn:Mboo_0558"/>
<dbReference type="eggNOG" id="arCOG01037">
    <property type="taxonomic scope" value="Archaea"/>
</dbReference>
<dbReference type="HOGENOM" id="CLU_079959_1_0_2"/>
<dbReference type="OrthoDB" id="31096at2157"/>
<dbReference type="Proteomes" id="UP000002408">
    <property type="component" value="Chromosome"/>
</dbReference>
<dbReference type="GO" id="GO:0005737">
    <property type="term" value="C:cytoplasm"/>
    <property type="evidence" value="ECO:0007669"/>
    <property type="project" value="UniProtKB-SubCell"/>
</dbReference>
<dbReference type="GO" id="GO:0005524">
    <property type="term" value="F:ATP binding"/>
    <property type="evidence" value="ECO:0007669"/>
    <property type="project" value="UniProtKB-UniRule"/>
</dbReference>
<dbReference type="GO" id="GO:0036430">
    <property type="term" value="F:CMP kinase activity"/>
    <property type="evidence" value="ECO:0007669"/>
    <property type="project" value="RHEA"/>
</dbReference>
<dbReference type="GO" id="GO:0036431">
    <property type="term" value="F:dCMP kinase activity"/>
    <property type="evidence" value="ECO:0007669"/>
    <property type="project" value="RHEA"/>
</dbReference>
<dbReference type="GO" id="GO:0006220">
    <property type="term" value="P:pyrimidine nucleotide metabolic process"/>
    <property type="evidence" value="ECO:0007669"/>
    <property type="project" value="UniProtKB-UniRule"/>
</dbReference>
<dbReference type="CDD" id="cd02020">
    <property type="entry name" value="CMPK"/>
    <property type="match status" value="1"/>
</dbReference>
<dbReference type="Gene3D" id="3.40.50.300">
    <property type="entry name" value="P-loop containing nucleotide triphosphate hydrolases"/>
    <property type="match status" value="1"/>
</dbReference>
<dbReference type="HAMAP" id="MF_00239">
    <property type="entry name" value="Cytidyl_kinase_type2"/>
    <property type="match status" value="1"/>
</dbReference>
<dbReference type="InterPro" id="IPR011892">
    <property type="entry name" value="Cyt_kin_arch"/>
</dbReference>
<dbReference type="InterPro" id="IPR011994">
    <property type="entry name" value="Cytidylate_kinase_dom"/>
</dbReference>
<dbReference type="InterPro" id="IPR027417">
    <property type="entry name" value="P-loop_NTPase"/>
</dbReference>
<dbReference type="NCBIfam" id="TIGR02173">
    <property type="entry name" value="cyt_kin_arch"/>
    <property type="match status" value="1"/>
</dbReference>
<dbReference type="Pfam" id="PF13189">
    <property type="entry name" value="Cytidylate_kin2"/>
    <property type="match status" value="1"/>
</dbReference>
<dbReference type="SUPFAM" id="SSF52540">
    <property type="entry name" value="P-loop containing nucleoside triphosphate hydrolases"/>
    <property type="match status" value="1"/>
</dbReference>
<reference key="1">
    <citation type="journal article" date="2015" name="Microbiology">
        <title>Genome of Methanoregula boonei 6A8 reveals adaptations to oligotrophic peatland environments.</title>
        <authorList>
            <person name="Braeuer S."/>
            <person name="Cadillo-Quiroz H."/>
            <person name="Kyrpides N."/>
            <person name="Woyke T."/>
            <person name="Goodwin L."/>
            <person name="Detter C."/>
            <person name="Podell S."/>
            <person name="Yavitt J.B."/>
            <person name="Zinder S.H."/>
        </authorList>
    </citation>
    <scope>NUCLEOTIDE SEQUENCE [LARGE SCALE GENOMIC DNA]</scope>
    <source>
        <strain>DSM 21154 / JCM 14090 / 6A8</strain>
    </source>
</reference>
<name>KCY_METB6</name>
<protein>
    <recommendedName>
        <fullName evidence="1">Cytidylate kinase</fullName>
        <shortName evidence="1">CK</shortName>
        <ecNumber evidence="1">2.7.4.25</ecNumber>
    </recommendedName>
    <alternativeName>
        <fullName evidence="1">Cytidine monophosphate kinase</fullName>
        <shortName evidence="1">CMP kinase</shortName>
    </alternativeName>
</protein>
<accession>A7I5R5</accession>
<keyword id="KW-0067">ATP-binding</keyword>
<keyword id="KW-0963">Cytoplasm</keyword>
<keyword id="KW-0418">Kinase</keyword>
<keyword id="KW-0547">Nucleotide-binding</keyword>
<keyword id="KW-1185">Reference proteome</keyword>
<keyword id="KW-0808">Transferase</keyword>
<proteinExistence type="inferred from homology"/>